<accession>Q971V1</accession>
<name>DPHB_SULTO</name>
<feature type="chain" id="PRO_0000156129" description="Diphthine synthase">
    <location>
        <begin position="1"/>
        <end position="254"/>
    </location>
</feature>
<feature type="binding site" evidence="1">
    <location>
        <position position="11"/>
    </location>
    <ligand>
        <name>S-adenosyl-L-methionine</name>
        <dbReference type="ChEBI" id="CHEBI:59789"/>
    </ligand>
</feature>
<feature type="binding site" evidence="1">
    <location>
        <position position="86"/>
    </location>
    <ligand>
        <name>S-adenosyl-L-methionine</name>
        <dbReference type="ChEBI" id="CHEBI:59789"/>
    </ligand>
</feature>
<feature type="binding site" evidence="1">
    <location>
        <position position="89"/>
    </location>
    <ligand>
        <name>S-adenosyl-L-methionine</name>
        <dbReference type="ChEBI" id="CHEBI:59789"/>
    </ligand>
</feature>
<feature type="binding site" evidence="1">
    <location>
        <begin position="114"/>
        <end position="115"/>
    </location>
    <ligand>
        <name>S-adenosyl-L-methionine</name>
        <dbReference type="ChEBI" id="CHEBI:59789"/>
    </ligand>
</feature>
<feature type="binding site" evidence="1">
    <location>
        <position position="166"/>
    </location>
    <ligand>
        <name>S-adenosyl-L-methionine</name>
        <dbReference type="ChEBI" id="CHEBI:59789"/>
    </ligand>
</feature>
<feature type="binding site" evidence="1">
    <location>
        <position position="207"/>
    </location>
    <ligand>
        <name>S-adenosyl-L-methionine</name>
        <dbReference type="ChEBI" id="CHEBI:59789"/>
    </ligand>
</feature>
<feature type="binding site" evidence="1">
    <location>
        <position position="232"/>
    </location>
    <ligand>
        <name>S-adenosyl-L-methionine</name>
        <dbReference type="ChEBI" id="CHEBI:59789"/>
    </ligand>
</feature>
<reference key="1">
    <citation type="journal article" date="2001" name="DNA Res.">
        <title>Complete genome sequence of an aerobic thermoacidophilic Crenarchaeon, Sulfolobus tokodaii strain7.</title>
        <authorList>
            <person name="Kawarabayasi Y."/>
            <person name="Hino Y."/>
            <person name="Horikawa H."/>
            <person name="Jin-no K."/>
            <person name="Takahashi M."/>
            <person name="Sekine M."/>
            <person name="Baba S."/>
            <person name="Ankai A."/>
            <person name="Kosugi H."/>
            <person name="Hosoyama A."/>
            <person name="Fukui S."/>
            <person name="Nagai Y."/>
            <person name="Nishijima K."/>
            <person name="Otsuka R."/>
            <person name="Nakazawa H."/>
            <person name="Takamiya M."/>
            <person name="Kato Y."/>
            <person name="Yoshizawa T."/>
            <person name="Tanaka T."/>
            <person name="Kudoh Y."/>
            <person name="Yamazaki J."/>
            <person name="Kushida N."/>
            <person name="Oguchi A."/>
            <person name="Aoki K."/>
            <person name="Masuda S."/>
            <person name="Yanagii M."/>
            <person name="Nishimura M."/>
            <person name="Yamagishi A."/>
            <person name="Oshima T."/>
            <person name="Kikuchi H."/>
        </authorList>
    </citation>
    <scope>NUCLEOTIDE SEQUENCE [LARGE SCALE GENOMIC DNA]</scope>
    <source>
        <strain>DSM 16993 / JCM 10545 / NBRC 100140 / 7</strain>
    </source>
</reference>
<dbReference type="EC" id="2.1.1.98" evidence="1"/>
<dbReference type="EMBL" id="BA000023">
    <property type="protein sequence ID" value="BAB66319.1"/>
    <property type="molecule type" value="Genomic_DNA"/>
</dbReference>
<dbReference type="RefSeq" id="WP_010979297.1">
    <property type="nucleotide sequence ID" value="NC_003106.2"/>
</dbReference>
<dbReference type="SMR" id="Q971V1"/>
<dbReference type="STRING" id="273063.STK_12780"/>
<dbReference type="GeneID" id="1459277"/>
<dbReference type="KEGG" id="sto:STK_12780"/>
<dbReference type="PATRIC" id="fig|273063.9.peg.1436"/>
<dbReference type="eggNOG" id="arCOG04161">
    <property type="taxonomic scope" value="Archaea"/>
</dbReference>
<dbReference type="OrthoDB" id="39139at2157"/>
<dbReference type="UniPathway" id="UPA00559"/>
<dbReference type="Proteomes" id="UP000001015">
    <property type="component" value="Chromosome"/>
</dbReference>
<dbReference type="GO" id="GO:0004164">
    <property type="term" value="F:diphthine synthase activity"/>
    <property type="evidence" value="ECO:0007669"/>
    <property type="project" value="UniProtKB-UniRule"/>
</dbReference>
<dbReference type="GO" id="GO:0032259">
    <property type="term" value="P:methylation"/>
    <property type="evidence" value="ECO:0007669"/>
    <property type="project" value="UniProtKB-KW"/>
</dbReference>
<dbReference type="GO" id="GO:0017183">
    <property type="term" value="P:protein histidyl modification to diphthamide"/>
    <property type="evidence" value="ECO:0007669"/>
    <property type="project" value="UniProtKB-UniRule"/>
</dbReference>
<dbReference type="CDD" id="cd11647">
    <property type="entry name" value="DHP5_DphB"/>
    <property type="match status" value="1"/>
</dbReference>
<dbReference type="Gene3D" id="3.40.1010.10">
    <property type="entry name" value="Cobalt-precorrin-4 Transmethylase, Domain 1"/>
    <property type="match status" value="1"/>
</dbReference>
<dbReference type="Gene3D" id="3.30.950.10">
    <property type="entry name" value="Methyltransferase, Cobalt-precorrin-4 Transmethylase, Domain 2"/>
    <property type="match status" value="1"/>
</dbReference>
<dbReference type="HAMAP" id="MF_01084">
    <property type="entry name" value="Diphthine_synth"/>
    <property type="match status" value="1"/>
</dbReference>
<dbReference type="InterPro" id="IPR000878">
    <property type="entry name" value="4pyrrol_Mease"/>
</dbReference>
<dbReference type="InterPro" id="IPR035996">
    <property type="entry name" value="4pyrrol_Methylase_sf"/>
</dbReference>
<dbReference type="InterPro" id="IPR014777">
    <property type="entry name" value="4pyrrole_Mease_sub1"/>
</dbReference>
<dbReference type="InterPro" id="IPR014776">
    <property type="entry name" value="4pyrrole_Mease_sub2"/>
</dbReference>
<dbReference type="InterPro" id="IPR004551">
    <property type="entry name" value="Dphthn_synthase"/>
</dbReference>
<dbReference type="NCBIfam" id="TIGR00522">
    <property type="entry name" value="dph5"/>
    <property type="match status" value="1"/>
</dbReference>
<dbReference type="PANTHER" id="PTHR10882:SF0">
    <property type="entry name" value="DIPHTHINE METHYL ESTER SYNTHASE"/>
    <property type="match status" value="1"/>
</dbReference>
<dbReference type="PANTHER" id="PTHR10882">
    <property type="entry name" value="DIPHTHINE SYNTHASE"/>
    <property type="match status" value="1"/>
</dbReference>
<dbReference type="Pfam" id="PF00590">
    <property type="entry name" value="TP_methylase"/>
    <property type="match status" value="1"/>
</dbReference>
<dbReference type="PIRSF" id="PIRSF036432">
    <property type="entry name" value="Diphthine_synth"/>
    <property type="match status" value="1"/>
</dbReference>
<dbReference type="SUPFAM" id="SSF53790">
    <property type="entry name" value="Tetrapyrrole methylase"/>
    <property type="match status" value="1"/>
</dbReference>
<gene>
    <name evidence="1" type="primary">dphB</name>
    <name type="ordered locus">STK_12780</name>
</gene>
<comment type="function">
    <text evidence="1">S-adenosyl-L-methionine-dependent methyltransferase that catalyzes the trimethylation of the amino group of the modified target histidine residue in translation elongation factor 2 (EF-2), to form an intermediate called diphthine. The three successive methylation reactions represent the second step of diphthamide biosynthesis.</text>
</comment>
<comment type="catalytic activity">
    <reaction evidence="1">
        <text>2-[(3S)-amino-3-carboxypropyl]-L-histidyl-[translation elongation factor 2] + 3 S-adenosyl-L-methionine = diphthine-[translation elongation factor 2] + 3 S-adenosyl-L-homocysteine + 3 H(+)</text>
        <dbReference type="Rhea" id="RHEA:36415"/>
        <dbReference type="Rhea" id="RHEA-COMP:9749"/>
        <dbReference type="Rhea" id="RHEA-COMP:10172"/>
        <dbReference type="ChEBI" id="CHEBI:15378"/>
        <dbReference type="ChEBI" id="CHEBI:57856"/>
        <dbReference type="ChEBI" id="CHEBI:59789"/>
        <dbReference type="ChEBI" id="CHEBI:73995"/>
        <dbReference type="ChEBI" id="CHEBI:82696"/>
        <dbReference type="EC" id="2.1.1.98"/>
    </reaction>
</comment>
<comment type="pathway">
    <text evidence="1">Protein modification; peptidyl-diphthamide biosynthesis.</text>
</comment>
<comment type="subunit">
    <text evidence="1">Homodimer.</text>
</comment>
<comment type="similarity">
    <text evidence="1">Belongs to the diphthine synthase family.</text>
</comment>
<proteinExistence type="inferred from homology"/>
<sequence>MPTLKLIGLGLSAKFVTREAIDEISKCNVVLFESYTSLSCDINLDFIKFLNKNVIIVDRKFIENNIKEIIKLLKEKEDVCIVTIGDPMIATTHVSLIVEVKDKGYNFKVIPGISVHCYIISKSMLSSYKFGKSVTITYPYNNKIDTTPYDVIYDNFIRGLHTILYLDLKEDKIMTAKEAVELLIEMEKIKKQGLVSDDRIIIVGQRLGCDDEEVVALRLKEVFNYKFKEPPHIIVFPTDKLHFMEVEALKCLMK</sequence>
<keyword id="KW-0489">Methyltransferase</keyword>
<keyword id="KW-1185">Reference proteome</keyword>
<keyword id="KW-0949">S-adenosyl-L-methionine</keyword>
<keyword id="KW-0808">Transferase</keyword>
<organism>
    <name type="scientific">Sulfurisphaera tokodaii (strain DSM 16993 / JCM 10545 / NBRC 100140 / 7)</name>
    <name type="common">Sulfolobus tokodaii</name>
    <dbReference type="NCBI Taxonomy" id="273063"/>
    <lineage>
        <taxon>Archaea</taxon>
        <taxon>Thermoproteota</taxon>
        <taxon>Thermoprotei</taxon>
        <taxon>Sulfolobales</taxon>
        <taxon>Sulfolobaceae</taxon>
        <taxon>Sulfurisphaera</taxon>
    </lineage>
</organism>
<protein>
    <recommendedName>
        <fullName evidence="1">Diphthine synthase</fullName>
        <ecNumber evidence="1">2.1.1.98</ecNumber>
    </recommendedName>
    <alternativeName>
        <fullName evidence="1">Diphthamide biosynthesis methyltransferase</fullName>
    </alternativeName>
</protein>
<evidence type="ECO:0000255" key="1">
    <source>
        <dbReference type="HAMAP-Rule" id="MF_01084"/>
    </source>
</evidence>